<name>LPLA_ECO55</name>
<organism>
    <name type="scientific">Escherichia coli (strain 55989 / EAEC)</name>
    <dbReference type="NCBI Taxonomy" id="585055"/>
    <lineage>
        <taxon>Bacteria</taxon>
        <taxon>Pseudomonadati</taxon>
        <taxon>Pseudomonadota</taxon>
        <taxon>Gammaproteobacteria</taxon>
        <taxon>Enterobacterales</taxon>
        <taxon>Enterobacteriaceae</taxon>
        <taxon>Escherichia</taxon>
    </lineage>
</organism>
<proteinExistence type="inferred from homology"/>
<dbReference type="EC" id="6.3.1.20" evidence="1"/>
<dbReference type="EMBL" id="CU928145">
    <property type="protein sequence ID" value="CAV02190.1"/>
    <property type="molecule type" value="Genomic_DNA"/>
</dbReference>
<dbReference type="RefSeq" id="WP_000105866.1">
    <property type="nucleotide sequence ID" value="NC_011748.1"/>
</dbReference>
<dbReference type="SMR" id="B7LEN2"/>
<dbReference type="KEGG" id="eck:EC55989_5048"/>
<dbReference type="HOGENOM" id="CLU_022986_0_1_6"/>
<dbReference type="UniPathway" id="UPA00537">
    <property type="reaction ID" value="UER00594"/>
</dbReference>
<dbReference type="UniPathway" id="UPA00537">
    <property type="reaction ID" value="UER00595"/>
</dbReference>
<dbReference type="Proteomes" id="UP000000746">
    <property type="component" value="Chromosome"/>
</dbReference>
<dbReference type="GO" id="GO:0005829">
    <property type="term" value="C:cytosol"/>
    <property type="evidence" value="ECO:0007669"/>
    <property type="project" value="TreeGrafter"/>
</dbReference>
<dbReference type="GO" id="GO:0005524">
    <property type="term" value="F:ATP binding"/>
    <property type="evidence" value="ECO:0007669"/>
    <property type="project" value="UniProtKB-KW"/>
</dbReference>
<dbReference type="GO" id="GO:0016979">
    <property type="term" value="F:lipoate-protein ligase activity"/>
    <property type="evidence" value="ECO:0007669"/>
    <property type="project" value="UniProtKB-UniRule"/>
</dbReference>
<dbReference type="GO" id="GO:0017118">
    <property type="term" value="F:lipoyltransferase activity"/>
    <property type="evidence" value="ECO:0007669"/>
    <property type="project" value="TreeGrafter"/>
</dbReference>
<dbReference type="GO" id="GO:0036211">
    <property type="term" value="P:protein modification process"/>
    <property type="evidence" value="ECO:0007669"/>
    <property type="project" value="InterPro"/>
</dbReference>
<dbReference type="CDD" id="cd16435">
    <property type="entry name" value="BPL_LplA_LipB"/>
    <property type="match status" value="1"/>
</dbReference>
<dbReference type="FunFam" id="3.30.390.50:FF:000002">
    <property type="entry name" value="Lipoate-protein ligase A"/>
    <property type="match status" value="1"/>
</dbReference>
<dbReference type="FunFam" id="3.30.930.10:FF:000024">
    <property type="entry name" value="Lipoate-protein ligase A"/>
    <property type="match status" value="1"/>
</dbReference>
<dbReference type="Gene3D" id="3.30.930.10">
    <property type="entry name" value="Bira Bifunctional Protein, Domain 2"/>
    <property type="match status" value="1"/>
</dbReference>
<dbReference type="Gene3D" id="3.30.390.50">
    <property type="entry name" value="CO dehydrogenase flavoprotein, C-terminal domain"/>
    <property type="match status" value="1"/>
</dbReference>
<dbReference type="HAMAP" id="MF_01602">
    <property type="entry name" value="LplA"/>
    <property type="match status" value="1"/>
</dbReference>
<dbReference type="InterPro" id="IPR045864">
    <property type="entry name" value="aa-tRNA-synth_II/BPL/LPL"/>
</dbReference>
<dbReference type="InterPro" id="IPR004143">
    <property type="entry name" value="BPL_LPL_catalytic"/>
</dbReference>
<dbReference type="InterPro" id="IPR023741">
    <property type="entry name" value="Lipoate_ligase_A"/>
</dbReference>
<dbReference type="InterPro" id="IPR019491">
    <property type="entry name" value="Lipoate_protein_ligase_C"/>
</dbReference>
<dbReference type="InterPro" id="IPR004562">
    <property type="entry name" value="LipoylTrfase_LipoateP_Ligase"/>
</dbReference>
<dbReference type="NCBIfam" id="TIGR00545">
    <property type="entry name" value="lipoyltrans"/>
    <property type="match status" value="1"/>
</dbReference>
<dbReference type="PANTHER" id="PTHR12561">
    <property type="entry name" value="LIPOATE-PROTEIN LIGASE"/>
    <property type="match status" value="1"/>
</dbReference>
<dbReference type="PANTHER" id="PTHR12561:SF3">
    <property type="entry name" value="LIPOYLTRANSFERASE 1, MITOCHONDRIAL"/>
    <property type="match status" value="1"/>
</dbReference>
<dbReference type="Pfam" id="PF10437">
    <property type="entry name" value="Lip_prot_lig_C"/>
    <property type="match status" value="1"/>
</dbReference>
<dbReference type="Pfam" id="PF21948">
    <property type="entry name" value="LplA-B_cat"/>
    <property type="match status" value="1"/>
</dbReference>
<dbReference type="SUPFAM" id="SSF55681">
    <property type="entry name" value="Class II aaRS and biotin synthetases"/>
    <property type="match status" value="1"/>
</dbReference>
<dbReference type="SUPFAM" id="SSF82649">
    <property type="entry name" value="SufE/NifU"/>
    <property type="match status" value="1"/>
</dbReference>
<dbReference type="PROSITE" id="PS51733">
    <property type="entry name" value="BPL_LPL_CATALYTIC"/>
    <property type="match status" value="1"/>
</dbReference>
<evidence type="ECO:0000255" key="1">
    <source>
        <dbReference type="HAMAP-Rule" id="MF_01602"/>
    </source>
</evidence>
<evidence type="ECO:0000255" key="2">
    <source>
        <dbReference type="PROSITE-ProRule" id="PRU01067"/>
    </source>
</evidence>
<accession>B7LEN2</accession>
<comment type="function">
    <text evidence="1">Catalyzes both the ATP-dependent activation of exogenously supplied lipoate to lipoyl-AMP and the transfer of the activated lipoyl onto the lipoyl domains of lipoate-dependent enzymes.</text>
</comment>
<comment type="catalytic activity">
    <reaction evidence="1">
        <text>L-lysyl-[lipoyl-carrier protein] + (R)-lipoate + ATP = N(6)-[(R)-lipoyl]-L-lysyl-[lipoyl-carrier protein] + AMP + diphosphate + H(+)</text>
        <dbReference type="Rhea" id="RHEA:49288"/>
        <dbReference type="Rhea" id="RHEA-COMP:10500"/>
        <dbReference type="Rhea" id="RHEA-COMP:10502"/>
        <dbReference type="ChEBI" id="CHEBI:15378"/>
        <dbReference type="ChEBI" id="CHEBI:29969"/>
        <dbReference type="ChEBI" id="CHEBI:30616"/>
        <dbReference type="ChEBI" id="CHEBI:33019"/>
        <dbReference type="ChEBI" id="CHEBI:83088"/>
        <dbReference type="ChEBI" id="CHEBI:83099"/>
        <dbReference type="ChEBI" id="CHEBI:456215"/>
        <dbReference type="EC" id="6.3.1.20"/>
    </reaction>
</comment>
<comment type="pathway">
    <text evidence="1">Protein modification; protein lipoylation via exogenous pathway; protein N(6)-(lipoyl)lysine from lipoate: step 1/2.</text>
</comment>
<comment type="pathway">
    <text evidence="1">Protein modification; protein lipoylation via exogenous pathway; protein N(6)-(lipoyl)lysine from lipoate: step 2/2.</text>
</comment>
<comment type="subunit">
    <text evidence="1">Monomer.</text>
</comment>
<comment type="subcellular location">
    <subcellularLocation>
        <location evidence="1">Cytoplasm</location>
    </subcellularLocation>
</comment>
<comment type="miscellaneous">
    <text evidence="1">In the transfer reaction, the free carboxyl group of lipoic acid is attached via an amide linkage to the epsilon-amino group of a specific lysine residue of lipoyl domains of lipoate-dependent enzymes.</text>
</comment>
<comment type="similarity">
    <text evidence="1">Belongs to the LplA family.</text>
</comment>
<sequence length="338" mass="37866">MSTLRLLISDSYDPWFNLAVEECIFRQMPATQRVLFLWRNADTVVIGRAQNPWKECNTRRMEEDNVRLARRSSGGGAVFHDLGNTCFTFMAGKPEYDKTISTSIVLNALNALGVSAEASGRNDLVVKTAEGDRKVSGSAYRETKDRGFHHGTLLLNADLSRLANYLNPDKKKLAAKGITSVRSRVTNLTELLPGITHEQVCEAITKAFFAHYGERVEAEIISPDKTPDLPNFAETFARQSSWEWNFGQAPAFSHLLDERFSWGGVELHFDVEKGHITRAQVFTDSLNPAPLEALTGRLQGGLYRADMLQQECEALLVDFPDQEKELRELSTWIAGAVR</sequence>
<keyword id="KW-0067">ATP-binding</keyword>
<keyword id="KW-0963">Cytoplasm</keyword>
<keyword id="KW-0436">Ligase</keyword>
<keyword id="KW-0547">Nucleotide-binding</keyword>
<keyword id="KW-1185">Reference proteome</keyword>
<feature type="chain" id="PRO_1000185795" description="Lipoate-protein ligase A">
    <location>
        <begin position="1"/>
        <end position="338"/>
    </location>
</feature>
<feature type="domain" description="BPL/LPL catalytic" evidence="2">
    <location>
        <begin position="29"/>
        <end position="216"/>
    </location>
</feature>
<feature type="binding site" evidence="1">
    <location>
        <position position="71"/>
    </location>
    <ligand>
        <name>ATP</name>
        <dbReference type="ChEBI" id="CHEBI:30616"/>
    </ligand>
</feature>
<feature type="binding site" evidence="1">
    <location>
        <begin position="76"/>
        <end position="79"/>
    </location>
    <ligand>
        <name>ATP</name>
        <dbReference type="ChEBI" id="CHEBI:30616"/>
    </ligand>
</feature>
<feature type="binding site" evidence="1">
    <location>
        <position position="134"/>
    </location>
    <ligand>
        <name>(R)-lipoate</name>
        <dbReference type="ChEBI" id="CHEBI:83088"/>
    </ligand>
</feature>
<feature type="binding site" evidence="1">
    <location>
        <position position="134"/>
    </location>
    <ligand>
        <name>ATP</name>
        <dbReference type="ChEBI" id="CHEBI:30616"/>
    </ligand>
</feature>
<gene>
    <name evidence="1" type="primary">lplA</name>
    <name type="ordered locus">EC55989_5048</name>
</gene>
<protein>
    <recommendedName>
        <fullName evidence="1">Lipoate-protein ligase A</fullName>
        <ecNumber evidence="1">6.3.1.20</ecNumber>
    </recommendedName>
    <alternativeName>
        <fullName evidence="1">Lipoate--protein ligase</fullName>
    </alternativeName>
</protein>
<reference key="1">
    <citation type="journal article" date="2009" name="PLoS Genet.">
        <title>Organised genome dynamics in the Escherichia coli species results in highly diverse adaptive paths.</title>
        <authorList>
            <person name="Touchon M."/>
            <person name="Hoede C."/>
            <person name="Tenaillon O."/>
            <person name="Barbe V."/>
            <person name="Baeriswyl S."/>
            <person name="Bidet P."/>
            <person name="Bingen E."/>
            <person name="Bonacorsi S."/>
            <person name="Bouchier C."/>
            <person name="Bouvet O."/>
            <person name="Calteau A."/>
            <person name="Chiapello H."/>
            <person name="Clermont O."/>
            <person name="Cruveiller S."/>
            <person name="Danchin A."/>
            <person name="Diard M."/>
            <person name="Dossat C."/>
            <person name="Karoui M.E."/>
            <person name="Frapy E."/>
            <person name="Garry L."/>
            <person name="Ghigo J.M."/>
            <person name="Gilles A.M."/>
            <person name="Johnson J."/>
            <person name="Le Bouguenec C."/>
            <person name="Lescat M."/>
            <person name="Mangenot S."/>
            <person name="Martinez-Jehanne V."/>
            <person name="Matic I."/>
            <person name="Nassif X."/>
            <person name="Oztas S."/>
            <person name="Petit M.A."/>
            <person name="Pichon C."/>
            <person name="Rouy Z."/>
            <person name="Ruf C.S."/>
            <person name="Schneider D."/>
            <person name="Tourret J."/>
            <person name="Vacherie B."/>
            <person name="Vallenet D."/>
            <person name="Medigue C."/>
            <person name="Rocha E.P.C."/>
            <person name="Denamur E."/>
        </authorList>
    </citation>
    <scope>NUCLEOTIDE SEQUENCE [LARGE SCALE GENOMIC DNA]</scope>
    <source>
        <strain>55989 / EAEC</strain>
    </source>
</reference>